<name>YCF39_PYRYE</name>
<proteinExistence type="inferred from homology"/>
<geneLocation type="chloroplast"/>
<evidence type="ECO:0000250" key="1">
    <source>
        <dbReference type="UniProtKB" id="P74429"/>
    </source>
</evidence>
<evidence type="ECO:0000305" key="2"/>
<gene>
    <name type="primary">ycf39</name>
</gene>
<organism>
    <name type="scientific">Pyropia yezoensis</name>
    <name type="common">Susabi-nori</name>
    <name type="synonym">Porphyra yezoensis</name>
    <dbReference type="NCBI Taxonomy" id="2788"/>
    <lineage>
        <taxon>Eukaryota</taxon>
        <taxon>Rhodophyta</taxon>
        <taxon>Bangiophyceae</taxon>
        <taxon>Bangiales</taxon>
        <taxon>Bangiaceae</taxon>
        <taxon>Pyropia</taxon>
    </lineage>
</organism>
<sequence length="319" mass="35695">MTLLVIGATGTLGRQIVRRALDEGYNVKCMVRNLRKSAFLKEWGAELIYGDLKLPESILQSFCGVTAIIDASTSRLPDPYNAEKIDLDGKIALIEAAKAAKVERFIFFSILNSEKYPDVPLMNLKSQVVDFLQKSNVKYIVFSLGGFFQGLINQYAIPILDKKSVWVTGESTPIAYIDTQDAAKLVIKSLGVPSTENRTLPLVGNPAWTSAEIIKLCEKLSGQKTQISQIPIGLLKALRRITKTLQWTWNISDRLAFAEILSSGEQFTAPMDEVYSILGIDRLEVISLEKYLQEYFGKILKVLKDITYEQGQQDNEISF</sequence>
<reference key="1">
    <citation type="submission" date="2003-11" db="EMBL/GenBank/DDBJ databases">
        <title>Whole genome sequence of Porphyra yezoensis chloroplast.</title>
        <authorList>
            <person name="Kunimoto M."/>
            <person name="Morishima K."/>
            <person name="Yoshikawa M."/>
            <person name="Fukuda S."/>
            <person name="Kobayashi T."/>
            <person name="Kobayashi M."/>
            <person name="Okazaki T."/>
            <person name="Ohara I."/>
            <person name="Nakayama I."/>
        </authorList>
    </citation>
    <scope>NUCLEOTIDE SEQUENCE [LARGE SCALE GENOMIC DNA]</scope>
    <source>
        <strain>U-51</strain>
    </source>
</reference>
<dbReference type="EC" id="1.-.-.-"/>
<dbReference type="EMBL" id="AP006715">
    <property type="protein sequence ID" value="BAE92362.1"/>
    <property type="molecule type" value="Genomic_DNA"/>
</dbReference>
<dbReference type="RefSeq" id="YP_536919.1">
    <property type="nucleotide sequence ID" value="NC_007932.1"/>
</dbReference>
<dbReference type="SMR" id="Q1XDP9"/>
<dbReference type="GeneID" id="3978966"/>
<dbReference type="GO" id="GO:0009507">
    <property type="term" value="C:chloroplast"/>
    <property type="evidence" value="ECO:0007669"/>
    <property type="project" value="UniProtKB-SubCell"/>
</dbReference>
<dbReference type="GO" id="GO:0009523">
    <property type="term" value="C:photosystem II"/>
    <property type="evidence" value="ECO:0007669"/>
    <property type="project" value="UniProtKB-KW"/>
</dbReference>
<dbReference type="GO" id="GO:0016491">
    <property type="term" value="F:oxidoreductase activity"/>
    <property type="evidence" value="ECO:0007669"/>
    <property type="project" value="UniProtKB-KW"/>
</dbReference>
<dbReference type="GO" id="GO:0015979">
    <property type="term" value="P:photosynthesis"/>
    <property type="evidence" value="ECO:0007669"/>
    <property type="project" value="UniProtKB-KW"/>
</dbReference>
<dbReference type="CDD" id="cd05243">
    <property type="entry name" value="SDR_a5"/>
    <property type="match status" value="1"/>
</dbReference>
<dbReference type="Gene3D" id="3.40.50.720">
    <property type="entry name" value="NAD(P)-binding Rossmann-like Domain"/>
    <property type="match status" value="1"/>
</dbReference>
<dbReference type="InterPro" id="IPR044256">
    <property type="entry name" value="HCF244-like"/>
</dbReference>
<dbReference type="InterPro" id="IPR036291">
    <property type="entry name" value="NAD(P)-bd_dom_sf"/>
</dbReference>
<dbReference type="InterPro" id="IPR008030">
    <property type="entry name" value="NmrA-like"/>
</dbReference>
<dbReference type="PANTHER" id="PTHR47128">
    <property type="match status" value="1"/>
</dbReference>
<dbReference type="PANTHER" id="PTHR47128:SF2">
    <property type="entry name" value="PROTEIN HIGH CHLOROPHYLL FLUORESCENCE PHENOTYPE 244, CHLOROPLASTIC"/>
    <property type="match status" value="1"/>
</dbReference>
<dbReference type="Pfam" id="PF05368">
    <property type="entry name" value="NmrA"/>
    <property type="match status" value="1"/>
</dbReference>
<dbReference type="SUPFAM" id="SSF51735">
    <property type="entry name" value="NAD(P)-binding Rossmann-fold domains"/>
    <property type="match status" value="1"/>
</dbReference>
<comment type="function">
    <text evidence="1">Involved in assembly of photosystem II.</text>
</comment>
<comment type="subcellular location">
    <subcellularLocation>
        <location>Plastid</location>
        <location>Chloroplast</location>
    </subcellularLocation>
</comment>
<comment type="similarity">
    <text evidence="2">Belongs to the NmrA-type oxidoreductase family. Ycf39 subfamily.</text>
</comment>
<feature type="chain" id="PRO_0000277318" description="Photosystem II assembly factor Ycf39">
    <location>
        <begin position="1"/>
        <end position="319"/>
    </location>
</feature>
<keyword id="KW-0150">Chloroplast</keyword>
<keyword id="KW-0560">Oxidoreductase</keyword>
<keyword id="KW-0602">Photosynthesis</keyword>
<keyword id="KW-0604">Photosystem II</keyword>
<keyword id="KW-0934">Plastid</keyword>
<accession>Q1XDP9</accession>
<protein>
    <recommendedName>
        <fullName evidence="2">Photosystem II assembly factor Ycf39</fullName>
        <ecNumber>1.-.-.-</ecNumber>
    </recommendedName>
</protein>